<evidence type="ECO:0000255" key="1">
    <source>
        <dbReference type="HAMAP-Rule" id="MF_00300"/>
    </source>
</evidence>
<evidence type="ECO:0000256" key="2">
    <source>
        <dbReference type="SAM" id="MobiDB-lite"/>
    </source>
</evidence>
<evidence type="ECO:0000305" key="3"/>
<accession>Q47QY9</accession>
<gene>
    <name evidence="1" type="primary">aroC</name>
    <name type="ordered locus">Tfu_1090</name>
</gene>
<reference key="1">
    <citation type="journal article" date="2007" name="J. Bacteriol.">
        <title>Genome sequence and analysis of the soil cellulolytic actinomycete Thermobifida fusca YX.</title>
        <authorList>
            <person name="Lykidis A."/>
            <person name="Mavromatis K."/>
            <person name="Ivanova N."/>
            <person name="Anderson I."/>
            <person name="Land M."/>
            <person name="DiBartolo G."/>
            <person name="Martinez M."/>
            <person name="Lapidus A."/>
            <person name="Lucas S."/>
            <person name="Copeland A."/>
            <person name="Richardson P."/>
            <person name="Wilson D.B."/>
            <person name="Kyrpides N."/>
        </authorList>
    </citation>
    <scope>NUCLEOTIDE SEQUENCE [LARGE SCALE GENOMIC DNA]</scope>
    <source>
        <strain>YX</strain>
    </source>
</reference>
<dbReference type="EC" id="4.2.3.5" evidence="1"/>
<dbReference type="EMBL" id="CP000088">
    <property type="protein sequence ID" value="AAZ55128.1"/>
    <property type="status" value="ALT_INIT"/>
    <property type="molecule type" value="Genomic_DNA"/>
</dbReference>
<dbReference type="RefSeq" id="WP_011291537.1">
    <property type="nucleotide sequence ID" value="NC_007333.1"/>
</dbReference>
<dbReference type="SMR" id="Q47QY9"/>
<dbReference type="STRING" id="269800.Tfu_1090"/>
<dbReference type="KEGG" id="tfu:Tfu_1090"/>
<dbReference type="eggNOG" id="COG0082">
    <property type="taxonomic scope" value="Bacteria"/>
</dbReference>
<dbReference type="HOGENOM" id="CLU_034547_2_0_11"/>
<dbReference type="OrthoDB" id="9771806at2"/>
<dbReference type="UniPathway" id="UPA00053">
    <property type="reaction ID" value="UER00090"/>
</dbReference>
<dbReference type="GO" id="GO:0005829">
    <property type="term" value="C:cytosol"/>
    <property type="evidence" value="ECO:0007669"/>
    <property type="project" value="TreeGrafter"/>
</dbReference>
<dbReference type="GO" id="GO:0004107">
    <property type="term" value="F:chorismate synthase activity"/>
    <property type="evidence" value="ECO:0007669"/>
    <property type="project" value="UniProtKB-UniRule"/>
</dbReference>
<dbReference type="GO" id="GO:0010181">
    <property type="term" value="F:FMN binding"/>
    <property type="evidence" value="ECO:0007669"/>
    <property type="project" value="TreeGrafter"/>
</dbReference>
<dbReference type="GO" id="GO:0008652">
    <property type="term" value="P:amino acid biosynthetic process"/>
    <property type="evidence" value="ECO:0007669"/>
    <property type="project" value="UniProtKB-KW"/>
</dbReference>
<dbReference type="GO" id="GO:0009073">
    <property type="term" value="P:aromatic amino acid family biosynthetic process"/>
    <property type="evidence" value="ECO:0007669"/>
    <property type="project" value="UniProtKB-KW"/>
</dbReference>
<dbReference type="GO" id="GO:0009423">
    <property type="term" value="P:chorismate biosynthetic process"/>
    <property type="evidence" value="ECO:0007669"/>
    <property type="project" value="UniProtKB-UniRule"/>
</dbReference>
<dbReference type="CDD" id="cd07304">
    <property type="entry name" value="Chorismate_synthase"/>
    <property type="match status" value="1"/>
</dbReference>
<dbReference type="FunFam" id="3.60.150.10:FF:000002">
    <property type="entry name" value="Chorismate synthase"/>
    <property type="match status" value="1"/>
</dbReference>
<dbReference type="Gene3D" id="3.60.150.10">
    <property type="entry name" value="Chorismate synthase AroC"/>
    <property type="match status" value="1"/>
</dbReference>
<dbReference type="HAMAP" id="MF_00300">
    <property type="entry name" value="Chorismate_synth"/>
    <property type="match status" value="1"/>
</dbReference>
<dbReference type="InterPro" id="IPR000453">
    <property type="entry name" value="Chorismate_synth"/>
</dbReference>
<dbReference type="InterPro" id="IPR035904">
    <property type="entry name" value="Chorismate_synth_AroC_sf"/>
</dbReference>
<dbReference type="InterPro" id="IPR020541">
    <property type="entry name" value="Chorismate_synthase_CS"/>
</dbReference>
<dbReference type="NCBIfam" id="TIGR00033">
    <property type="entry name" value="aroC"/>
    <property type="match status" value="1"/>
</dbReference>
<dbReference type="NCBIfam" id="NF003793">
    <property type="entry name" value="PRK05382.1"/>
    <property type="match status" value="1"/>
</dbReference>
<dbReference type="PANTHER" id="PTHR21085">
    <property type="entry name" value="CHORISMATE SYNTHASE"/>
    <property type="match status" value="1"/>
</dbReference>
<dbReference type="PANTHER" id="PTHR21085:SF0">
    <property type="entry name" value="CHORISMATE SYNTHASE"/>
    <property type="match status" value="1"/>
</dbReference>
<dbReference type="Pfam" id="PF01264">
    <property type="entry name" value="Chorismate_synt"/>
    <property type="match status" value="1"/>
</dbReference>
<dbReference type="PIRSF" id="PIRSF001456">
    <property type="entry name" value="Chorismate_synth"/>
    <property type="match status" value="1"/>
</dbReference>
<dbReference type="SUPFAM" id="SSF103263">
    <property type="entry name" value="Chorismate synthase, AroC"/>
    <property type="match status" value="1"/>
</dbReference>
<dbReference type="PROSITE" id="PS00787">
    <property type="entry name" value="CHORISMATE_SYNTHASE_1"/>
    <property type="match status" value="1"/>
</dbReference>
<dbReference type="PROSITE" id="PS00789">
    <property type="entry name" value="CHORISMATE_SYNTHASE_3"/>
    <property type="match status" value="1"/>
</dbReference>
<protein>
    <recommendedName>
        <fullName evidence="1">Chorismate synthase</fullName>
        <shortName evidence="1">CS</shortName>
        <ecNumber evidence="1">4.2.3.5</ecNumber>
    </recommendedName>
    <alternativeName>
        <fullName evidence="1">5-enolpyruvylshikimate-3-phosphate phospholyase</fullName>
    </alternativeName>
</protein>
<organism>
    <name type="scientific">Thermobifida fusca (strain YX)</name>
    <dbReference type="NCBI Taxonomy" id="269800"/>
    <lineage>
        <taxon>Bacteria</taxon>
        <taxon>Bacillati</taxon>
        <taxon>Actinomycetota</taxon>
        <taxon>Actinomycetes</taxon>
        <taxon>Streptosporangiales</taxon>
        <taxon>Nocardiopsidaceae</taxon>
        <taxon>Thermobifida</taxon>
    </lineage>
</organism>
<feature type="chain" id="PRO_0000256356" description="Chorismate synthase">
    <location>
        <begin position="1"/>
        <end position="393"/>
    </location>
</feature>
<feature type="region of interest" description="Disordered" evidence="2">
    <location>
        <begin position="280"/>
        <end position="306"/>
    </location>
</feature>
<feature type="binding site" evidence="1">
    <location>
        <position position="40"/>
    </location>
    <ligand>
        <name>NADP(+)</name>
        <dbReference type="ChEBI" id="CHEBI:58349"/>
    </ligand>
</feature>
<feature type="binding site" evidence="1">
    <location>
        <position position="46"/>
    </location>
    <ligand>
        <name>NADP(+)</name>
        <dbReference type="ChEBI" id="CHEBI:58349"/>
    </ligand>
</feature>
<feature type="binding site" evidence="1">
    <location>
        <begin position="135"/>
        <end position="137"/>
    </location>
    <ligand>
        <name>FMN</name>
        <dbReference type="ChEBI" id="CHEBI:58210"/>
    </ligand>
</feature>
<feature type="binding site" evidence="1">
    <location>
        <begin position="257"/>
        <end position="258"/>
    </location>
    <ligand>
        <name>FMN</name>
        <dbReference type="ChEBI" id="CHEBI:58210"/>
    </ligand>
</feature>
<feature type="binding site" evidence="1">
    <location>
        <position position="301"/>
    </location>
    <ligand>
        <name>FMN</name>
        <dbReference type="ChEBI" id="CHEBI:58210"/>
    </ligand>
</feature>
<feature type="binding site" evidence="1">
    <location>
        <begin position="316"/>
        <end position="320"/>
    </location>
    <ligand>
        <name>FMN</name>
        <dbReference type="ChEBI" id="CHEBI:58210"/>
    </ligand>
</feature>
<feature type="binding site" evidence="1">
    <location>
        <position position="342"/>
    </location>
    <ligand>
        <name>FMN</name>
        <dbReference type="ChEBI" id="CHEBI:58210"/>
    </ligand>
</feature>
<sequence length="393" mass="41518">MLRWLTAGESHGPALVAILEGLPAGVSVTSDDIAAALLRRRAGYGRGARMKFEKDEVSIIGGIRHGRTLGGPVAIQVGNTEWPKWQKVMSPDPVPAEELEGVARNAPLTRPRPGHADLVGMQKYGYDEARPILERASARETAARVALGEVARQFLRQALGVEIVSHVVAMGSVSVPDDAPIPAPEDLARVDADPVRCFDPETSARMVAEVDDTRKTGDTLGGVVEVIAYGLPPGLGSHVHWDRRLDARLAGALMGIQAIKGVEFGDGFRTAARRGSAAHDEIDVGPDGIRRRSNRAGGVEGGMSTGDPLRVRAAMKPIATVPRALDTIDVSTGQPAQAHHQRSDVTAVPAAGVVAEAMVALVLADAALEKFGGDSVAETVRNLRGYLDSLIVR</sequence>
<name>AROC_THEFY</name>
<keyword id="KW-0028">Amino-acid biosynthesis</keyword>
<keyword id="KW-0057">Aromatic amino acid biosynthesis</keyword>
<keyword id="KW-0274">FAD</keyword>
<keyword id="KW-0285">Flavoprotein</keyword>
<keyword id="KW-0288">FMN</keyword>
<keyword id="KW-0456">Lyase</keyword>
<keyword id="KW-0521">NADP</keyword>
<proteinExistence type="inferred from homology"/>
<comment type="function">
    <text evidence="1">Catalyzes the anti-1,4-elimination of the C-3 phosphate and the C-6 proR hydrogen from 5-enolpyruvylshikimate-3-phosphate (EPSP) to yield chorismate, which is the branch point compound that serves as the starting substrate for the three terminal pathways of aromatic amino acid biosynthesis. This reaction introduces a second double bond into the aromatic ring system.</text>
</comment>
<comment type="catalytic activity">
    <reaction evidence="1">
        <text>5-O-(1-carboxyvinyl)-3-phosphoshikimate = chorismate + phosphate</text>
        <dbReference type="Rhea" id="RHEA:21020"/>
        <dbReference type="ChEBI" id="CHEBI:29748"/>
        <dbReference type="ChEBI" id="CHEBI:43474"/>
        <dbReference type="ChEBI" id="CHEBI:57701"/>
        <dbReference type="EC" id="4.2.3.5"/>
    </reaction>
</comment>
<comment type="cofactor">
    <cofactor evidence="1">
        <name>FMNH2</name>
        <dbReference type="ChEBI" id="CHEBI:57618"/>
    </cofactor>
    <text evidence="1">Reduced FMN (FMNH(2)).</text>
</comment>
<comment type="pathway">
    <text evidence="1">Metabolic intermediate biosynthesis; chorismate biosynthesis; chorismate from D-erythrose 4-phosphate and phosphoenolpyruvate: step 7/7.</text>
</comment>
<comment type="subunit">
    <text evidence="1">Homotetramer.</text>
</comment>
<comment type="similarity">
    <text evidence="1">Belongs to the chorismate synthase family.</text>
</comment>
<comment type="sequence caution" evidence="3">
    <conflict type="erroneous initiation">
        <sequence resource="EMBL-CDS" id="AAZ55128"/>
    </conflict>
    <text>Extended N-terminus.</text>
</comment>